<gene>
    <name evidence="6" type="primary">nrdD</name>
    <name type="synonym">49.1</name>
    <name type="synonym">55.11/55.13</name>
    <name type="synonym">SUNY</name>
</gene>
<proteinExistence type="evidence at protein level"/>
<accession>P07071</accession>
<accession>P07073</accession>
<accession>Q38428</accession>
<accession>Q9T0V5</accession>
<organism>
    <name type="scientific">Enterobacteria phage T4</name>
    <name type="common">Bacteriophage T4</name>
    <dbReference type="NCBI Taxonomy" id="10665"/>
    <lineage>
        <taxon>Viruses</taxon>
        <taxon>Duplodnaviria</taxon>
        <taxon>Heunggongvirae</taxon>
        <taxon>Uroviricota</taxon>
        <taxon>Caudoviricetes</taxon>
        <taxon>Straboviridae</taxon>
        <taxon>Tevenvirinae</taxon>
        <taxon>Tequatrovirus</taxon>
    </lineage>
</organism>
<organismHost>
    <name type="scientific">Escherichia coli</name>
    <dbReference type="NCBI Taxonomy" id="562"/>
</organismHost>
<keyword id="KW-0002">3D-structure</keyword>
<keyword id="KW-0479">Metal-binding</keyword>
<keyword id="KW-0556">Organic radical</keyword>
<keyword id="KW-0560">Oxidoreductase</keyword>
<keyword id="KW-1185">Reference proteome</keyword>
<keyword id="KW-0862">Zinc</keyword>
<dbReference type="EC" id="1.1.98.6" evidence="5"/>
<dbReference type="EMBL" id="Y00122">
    <property type="protein sequence ID" value="CAA68308.1"/>
    <property type="molecule type" value="Genomic_DNA"/>
</dbReference>
<dbReference type="EMBL" id="Y00122">
    <property type="protein sequence ID" value="CAA68310.1"/>
    <property type="status" value="ALT_SEQ"/>
    <property type="molecule type" value="Genomic_DNA"/>
</dbReference>
<dbReference type="EMBL" id="AF158101">
    <property type="protein sequence ID" value="AAD42633.1"/>
    <property type="molecule type" value="Genomic_DNA"/>
</dbReference>
<dbReference type="EMBL" id="X12629">
    <property type="protein sequence ID" value="CAA31150.1"/>
    <property type="molecule type" value="Genomic_DNA"/>
</dbReference>
<dbReference type="PIR" id="E29284">
    <property type="entry name" value="Z6BPT9"/>
</dbReference>
<dbReference type="PIR" id="S01907">
    <property type="entry name" value="Z4BPT9"/>
</dbReference>
<dbReference type="RefSeq" id="NP_049690.1">
    <property type="nucleotide sequence ID" value="NC_000866.4"/>
</dbReference>
<dbReference type="PDB" id="1H78">
    <property type="method" value="X-ray"/>
    <property type="resolution" value="2.50 A"/>
    <property type="chains" value="A=1-605"/>
</dbReference>
<dbReference type="PDB" id="1H79">
    <property type="method" value="X-ray"/>
    <property type="resolution" value="2.90 A"/>
    <property type="chains" value="A=1-605"/>
</dbReference>
<dbReference type="PDB" id="1H7A">
    <property type="method" value="X-ray"/>
    <property type="resolution" value="2.75 A"/>
    <property type="chains" value="A=1-605"/>
</dbReference>
<dbReference type="PDB" id="1H7B">
    <property type="method" value="X-ray"/>
    <property type="resolution" value="2.45 A"/>
    <property type="chains" value="A=1-605"/>
</dbReference>
<dbReference type="PDB" id="1HK8">
    <property type="method" value="X-ray"/>
    <property type="resolution" value="2.45 A"/>
    <property type="chains" value="A=1-605"/>
</dbReference>
<dbReference type="PDBsum" id="1H78"/>
<dbReference type="PDBsum" id="1H79"/>
<dbReference type="PDBsum" id="1H7A"/>
<dbReference type="PDBsum" id="1H7B"/>
<dbReference type="PDBsum" id="1HK8"/>
<dbReference type="SMR" id="P07071"/>
<dbReference type="DrugBank" id="DB03258">
    <property type="generic name" value="2'-Deoxycytidine 5'-triphosphate"/>
</dbReference>
<dbReference type="DrugBank" id="DB02181">
    <property type="generic name" value="2'-Deoxyguanosine-5'-Triphosphate"/>
</dbReference>
<dbReference type="DrugBank" id="DB03222">
    <property type="generic name" value="dATP"/>
</dbReference>
<dbReference type="DrugBank" id="DB02452">
    <property type="generic name" value="Thymidine 5'-triphosphate"/>
</dbReference>
<dbReference type="GeneID" id="1258655"/>
<dbReference type="KEGG" id="vg:1258655"/>
<dbReference type="OrthoDB" id="420at10239"/>
<dbReference type="BRENDA" id="1.1.98.6">
    <property type="organism ID" value="732"/>
</dbReference>
<dbReference type="EvolutionaryTrace" id="P07071"/>
<dbReference type="PRO" id="PR:P07071"/>
<dbReference type="Proteomes" id="UP000009087">
    <property type="component" value="Segment"/>
</dbReference>
<dbReference type="GO" id="GO:0046872">
    <property type="term" value="F:metal ion binding"/>
    <property type="evidence" value="ECO:0007669"/>
    <property type="project" value="UniProtKB-KW"/>
</dbReference>
<dbReference type="GO" id="GO:0004748">
    <property type="term" value="F:ribonucleoside-diphosphate reductase activity, thioredoxin disulfide as acceptor"/>
    <property type="evidence" value="ECO:0007669"/>
    <property type="project" value="TreeGrafter"/>
</dbReference>
<dbReference type="GO" id="GO:0008998">
    <property type="term" value="F:ribonucleoside-triphosphate reductase (thioredoxin) activity"/>
    <property type="evidence" value="ECO:0007669"/>
    <property type="project" value="InterPro"/>
</dbReference>
<dbReference type="GO" id="GO:0009265">
    <property type="term" value="P:2'-deoxyribonucleotide biosynthetic process"/>
    <property type="evidence" value="ECO:0007669"/>
    <property type="project" value="TreeGrafter"/>
</dbReference>
<dbReference type="GO" id="GO:0006260">
    <property type="term" value="P:DNA replication"/>
    <property type="evidence" value="ECO:0007669"/>
    <property type="project" value="InterPro"/>
</dbReference>
<dbReference type="CDD" id="cd01675">
    <property type="entry name" value="RNR_III"/>
    <property type="match status" value="1"/>
</dbReference>
<dbReference type="Gene3D" id="3.20.70.20">
    <property type="match status" value="1"/>
</dbReference>
<dbReference type="InterPro" id="IPR019777">
    <property type="entry name" value="Form_AcTrfase_GR_CS"/>
</dbReference>
<dbReference type="InterPro" id="IPR001150">
    <property type="entry name" value="Gly_radical"/>
</dbReference>
<dbReference type="InterPro" id="IPR012833">
    <property type="entry name" value="NrdD"/>
</dbReference>
<dbReference type="NCBIfam" id="TIGR02487">
    <property type="entry name" value="NrdD"/>
    <property type="match status" value="1"/>
</dbReference>
<dbReference type="NCBIfam" id="NF006732">
    <property type="entry name" value="PRK09263.1"/>
    <property type="match status" value="1"/>
</dbReference>
<dbReference type="PANTHER" id="PTHR21075">
    <property type="entry name" value="ANAEROBIC RIBONUCLEOSIDE-TRIPHOSPHATE REDUCTASE"/>
    <property type="match status" value="1"/>
</dbReference>
<dbReference type="PANTHER" id="PTHR21075:SF0">
    <property type="entry name" value="ANAEROBIC RIBONUCLEOSIDE-TRIPHOSPHATE REDUCTASE"/>
    <property type="match status" value="1"/>
</dbReference>
<dbReference type="Pfam" id="PF13597">
    <property type="entry name" value="NRDD"/>
    <property type="match status" value="1"/>
</dbReference>
<dbReference type="SUPFAM" id="SSF51998">
    <property type="entry name" value="PFL-like glycyl radical enzymes"/>
    <property type="match status" value="1"/>
</dbReference>
<dbReference type="PROSITE" id="PS00850">
    <property type="entry name" value="GLY_RADICAL_1"/>
    <property type="match status" value="1"/>
</dbReference>
<dbReference type="PROSITE" id="PS51149">
    <property type="entry name" value="GLY_RADICAL_2"/>
    <property type="match status" value="1"/>
</dbReference>
<comment type="function">
    <text evidence="4 5">Catalyzes the conversion of ribonucleotides into deoxyribonucleotides, which are required for DNA synthesis and repair.</text>
</comment>
<comment type="catalytic activity">
    <reaction evidence="5">
        <text>a ribonucleoside 5'-triphosphate + formate + H(+) = a 2'-deoxyribonucleoside 5'-triphosphate + CO2 + H2O</text>
        <dbReference type="Rhea" id="RHEA:51476"/>
        <dbReference type="ChEBI" id="CHEBI:15377"/>
        <dbReference type="ChEBI" id="CHEBI:15378"/>
        <dbReference type="ChEBI" id="CHEBI:15740"/>
        <dbReference type="ChEBI" id="CHEBI:16526"/>
        <dbReference type="ChEBI" id="CHEBI:61557"/>
        <dbReference type="ChEBI" id="CHEBI:61560"/>
        <dbReference type="EC" id="1.1.98.6"/>
    </reaction>
</comment>
<comment type="activity regulation">
    <text evidence="5">Activated under anaerobic conditions by NrdG, a tightly associated activase. Activation involves the formation of a glycyl radical at Gly-580.</text>
</comment>
<comment type="subunit">
    <text evidence="5">Homodimer. Forms a tetramer composed of two NrdD and two NrdG subunits.</text>
</comment>
<comment type="similarity">
    <text evidence="7">Belongs to the anaerobic ribonucleoside-triphosphate reductase family.</text>
</comment>
<protein>
    <recommendedName>
        <fullName evidence="7">Anaerobic ribonucleoside-triphosphate reductase</fullName>
        <ecNumber evidence="5">1.1.98.6</ecNumber>
    </recommendedName>
    <alternativeName>
        <fullName evidence="7">Class III ribonucleoside-triphosphate reductase</fullName>
    </alternativeName>
</protein>
<name>NRDD_BPT4</name>
<evidence type="ECO:0000255" key="1">
    <source>
        <dbReference type="PROSITE-ProRule" id="PRU00493"/>
    </source>
</evidence>
<evidence type="ECO:0000269" key="2">
    <source>
    </source>
</evidence>
<evidence type="ECO:0000269" key="3">
    <source>
    </source>
</evidence>
<evidence type="ECO:0000269" key="4">
    <source>
    </source>
</evidence>
<evidence type="ECO:0000269" key="5">
    <source>
    </source>
</evidence>
<evidence type="ECO:0000303" key="6">
    <source>
    </source>
</evidence>
<evidence type="ECO:0000305" key="7"/>
<evidence type="ECO:0000305" key="8">
    <source>
    </source>
</evidence>
<evidence type="ECO:0007744" key="9">
    <source>
        <dbReference type="PDB" id="1H78"/>
    </source>
</evidence>
<evidence type="ECO:0007744" key="10">
    <source>
        <dbReference type="PDB" id="1H79"/>
    </source>
</evidence>
<evidence type="ECO:0007744" key="11">
    <source>
        <dbReference type="PDB" id="1H7A"/>
    </source>
</evidence>
<evidence type="ECO:0007744" key="12">
    <source>
        <dbReference type="PDB" id="1H7B"/>
    </source>
</evidence>
<evidence type="ECO:0007744" key="13">
    <source>
        <dbReference type="PDB" id="1HK8"/>
    </source>
</evidence>
<evidence type="ECO:0007829" key="14">
    <source>
        <dbReference type="PDB" id="1H78"/>
    </source>
</evidence>
<evidence type="ECO:0007829" key="15">
    <source>
        <dbReference type="PDB" id="1H79"/>
    </source>
</evidence>
<evidence type="ECO:0007829" key="16">
    <source>
        <dbReference type="PDB" id="1H7A"/>
    </source>
</evidence>
<evidence type="ECO:0007829" key="17">
    <source>
        <dbReference type="PDB" id="1H7B"/>
    </source>
</evidence>
<evidence type="ECO:0007829" key="18">
    <source>
        <dbReference type="PDB" id="1HK8"/>
    </source>
</evidence>
<sequence length="605" mass="67957">MTIEKEIEGLIHKTNKDLLNENANKDSRVFPTQRDLMAGIVSKHIAKNMVPSFIMKAHESGIIHVHDIDYSPALPFTNCCLVDLKGMLENGFKLGNAQIETPKSIGVATAIMAQITAQVASHQYGGTTFANVDKVLSPYVKRTYAKHIEDAEKWQIADALNYAQSKTEKDVYDAFQAYEYEVNTLFSSNGQTPFVTITFGTGTDWTERMIQKAILKNRIKGLGRDGITPIFPKLVMFVEEGVNLYKDDPNYDIKQLALECASKRMYPDIISAKNNKAITGSSVPVSPMGCRSFLSVWKDSTGNEILDGRNNLGVVTLNLPRIALDSYIGTQFNEQKFVELFNERMDLCFEALMCRISSLKGVKATVAPILYQEGAFGVRLKPDDDIIELFKNGRSSVSLGYIGIHELNILVGRDIGREILTKMNAHLKQWTERTGFAFSLYSTPAENLCYRFCKLDTEKYGSVKDVTDKGWYTNSFHVSVEENITPFEKISREAPYHFIATGGHISYVELPDMKNNLKGLEAVWDYAAQHLDYFGVNMPVDKCFTCGSTHEMTPTENGFVCSICGETDPKKMNTIRRTCGYLGNPNERGFNLGKNKEIMHRVKHQ</sequence>
<feature type="chain" id="PRO_0000166686" description="Anaerobic ribonucleoside-triphosphate reductase">
    <location>
        <begin position="1"/>
        <end position="605"/>
    </location>
</feature>
<feature type="domain" description="Glycine radical" evidence="1">
    <location>
        <begin position="482"/>
        <end position="605"/>
    </location>
</feature>
<feature type="binding site" evidence="2 9">
    <location>
        <position position="64"/>
    </location>
    <ligand>
        <name>dCTP</name>
        <dbReference type="ChEBI" id="CHEBI:61481"/>
        <label>1</label>
    </ligand>
</feature>
<feature type="binding site" evidence="3 13">
    <location>
        <position position="64"/>
    </location>
    <ligand>
        <name>dGTP</name>
        <dbReference type="ChEBI" id="CHEBI:61429"/>
        <label>1</label>
    </ligand>
</feature>
<feature type="binding site" evidence="2 9">
    <location>
        <position position="66"/>
    </location>
    <ligand>
        <name>dCTP</name>
        <dbReference type="ChEBI" id="CHEBI:61481"/>
        <label>1</label>
    </ligand>
</feature>
<feature type="binding site" evidence="3 13">
    <location>
        <position position="66"/>
    </location>
    <ligand>
        <name>dGTP</name>
        <dbReference type="ChEBI" id="CHEBI:61429"/>
        <label>1</label>
    </ligand>
</feature>
<feature type="binding site" evidence="3 13">
    <location>
        <position position="67"/>
    </location>
    <ligand>
        <name>dGTP</name>
        <dbReference type="ChEBI" id="CHEBI:61429"/>
        <label>1</label>
    </ligand>
</feature>
<feature type="binding site" evidence="2 11">
    <location>
        <position position="100"/>
    </location>
    <ligand>
        <name>dATP</name>
        <dbReference type="ChEBI" id="CHEBI:61404"/>
    </ligand>
</feature>
<feature type="binding site" evidence="2 9">
    <location>
        <position position="100"/>
    </location>
    <ligand>
        <name>dCTP</name>
        <dbReference type="ChEBI" id="CHEBI:61481"/>
        <label>2</label>
    </ligand>
</feature>
<feature type="binding site" evidence="3 13">
    <location>
        <position position="100"/>
    </location>
    <ligand>
        <name>dGTP</name>
        <dbReference type="ChEBI" id="CHEBI:61429"/>
        <label>2</label>
    </ligand>
</feature>
<feature type="binding site" evidence="2 10">
    <location>
        <position position="100"/>
    </location>
    <ligand>
        <name>dTTP</name>
        <dbReference type="ChEBI" id="CHEBI:37568"/>
    </ligand>
</feature>
<feature type="binding site" evidence="2 11">
    <location>
        <position position="103"/>
    </location>
    <ligand>
        <name>dATP</name>
        <dbReference type="ChEBI" id="CHEBI:61404"/>
    </ligand>
</feature>
<feature type="binding site" evidence="2 9">
    <location>
        <position position="103"/>
    </location>
    <ligand>
        <name>dCTP</name>
        <dbReference type="ChEBI" id="CHEBI:61481"/>
        <label>2</label>
    </ligand>
</feature>
<feature type="binding site" evidence="3 13">
    <location>
        <position position="103"/>
    </location>
    <ligand>
        <name>dGTP</name>
        <dbReference type="ChEBI" id="CHEBI:61429"/>
        <label>2</label>
    </ligand>
</feature>
<feature type="binding site" evidence="2 11">
    <location>
        <position position="114"/>
    </location>
    <ligand>
        <name>dATP</name>
        <dbReference type="ChEBI" id="CHEBI:61404"/>
    </ligand>
</feature>
<feature type="binding site" evidence="2 9">
    <location>
        <position position="114"/>
    </location>
    <ligand>
        <name>dCTP</name>
        <dbReference type="ChEBI" id="CHEBI:61481"/>
        <label>2</label>
    </ligand>
</feature>
<feature type="binding site" evidence="2 10">
    <location>
        <position position="114"/>
    </location>
    <ligand>
        <name>dTTP</name>
        <dbReference type="ChEBI" id="CHEBI:37568"/>
    </ligand>
</feature>
<feature type="binding site" evidence="2 11">
    <location>
        <position position="146"/>
    </location>
    <ligand>
        <name>dATP</name>
        <dbReference type="ChEBI" id="CHEBI:61404"/>
    </ligand>
</feature>
<feature type="binding site" evidence="2 9">
    <location>
        <position position="146"/>
    </location>
    <ligand>
        <name>dCTP</name>
        <dbReference type="ChEBI" id="CHEBI:61481"/>
        <label>2</label>
    </ligand>
</feature>
<feature type="binding site" evidence="3 13">
    <location>
        <position position="146"/>
    </location>
    <ligand>
        <name>dGTP</name>
        <dbReference type="ChEBI" id="CHEBI:61429"/>
        <label>2</label>
    </ligand>
</feature>
<feature type="binding site" evidence="2 10">
    <location>
        <position position="146"/>
    </location>
    <ligand>
        <name>dTTP</name>
        <dbReference type="ChEBI" id="CHEBI:37568"/>
    </ligand>
</feature>
<feature type="binding site" evidence="2 9">
    <location>
        <begin position="445"/>
        <end position="448"/>
    </location>
    <ligand>
        <name>dCTP</name>
        <dbReference type="ChEBI" id="CHEBI:61481"/>
        <label>1</label>
    </ligand>
</feature>
<feature type="binding site" evidence="3 13">
    <location>
        <position position="447"/>
    </location>
    <ligand>
        <name>dGTP</name>
        <dbReference type="ChEBI" id="CHEBI:61429"/>
        <label>1</label>
    </ligand>
</feature>
<feature type="binding site" evidence="3 13">
    <location>
        <position position="448"/>
    </location>
    <ligand>
        <name>dGTP</name>
        <dbReference type="ChEBI" id="CHEBI:61429"/>
        <label>1</label>
    </ligand>
</feature>
<feature type="binding site" evidence="3 8 13">
    <location>
        <position position="543"/>
    </location>
    <ligand>
        <name>Zn(2+)</name>
        <dbReference type="ChEBI" id="CHEBI:29105"/>
    </ligand>
</feature>
<feature type="binding site" evidence="3 8 13">
    <location>
        <position position="546"/>
    </location>
    <ligand>
        <name>Zn(2+)</name>
        <dbReference type="ChEBI" id="CHEBI:29105"/>
    </ligand>
</feature>
<feature type="binding site" evidence="3 8 13">
    <location>
        <position position="561"/>
    </location>
    <ligand>
        <name>Zn(2+)</name>
        <dbReference type="ChEBI" id="CHEBI:29105"/>
    </ligand>
</feature>
<feature type="binding site" evidence="3 8 13">
    <location>
        <position position="564"/>
    </location>
    <ligand>
        <name>Zn(2+)</name>
        <dbReference type="ChEBI" id="CHEBI:29105"/>
    </ligand>
</feature>
<feature type="modified residue" description="Glycine radical" evidence="5">
    <location>
        <position position="580"/>
    </location>
</feature>
<feature type="mutagenesis site" description="Lacks both glycyl radical and activity. Does not affect interaction with NrdG." evidence="5">
    <original>G</original>
    <variation>A</variation>
    <location>
        <position position="580"/>
    </location>
</feature>
<feature type="helix" evidence="17">
    <location>
        <begin position="30"/>
        <end position="47"/>
    </location>
</feature>
<feature type="helix" evidence="17">
    <location>
        <begin position="52"/>
        <end position="59"/>
    </location>
</feature>
<feature type="strand" evidence="17">
    <location>
        <begin position="62"/>
        <end position="65"/>
    </location>
</feature>
<feature type="turn" evidence="17">
    <location>
        <begin position="66"/>
        <end position="73"/>
    </location>
</feature>
<feature type="helix" evidence="17">
    <location>
        <begin position="84"/>
        <end position="89"/>
    </location>
</feature>
<feature type="strand" evidence="17">
    <location>
        <begin position="92"/>
        <end position="94"/>
    </location>
</feature>
<feature type="strand" evidence="17">
    <location>
        <begin position="97"/>
        <end position="99"/>
    </location>
</feature>
<feature type="helix" evidence="17">
    <location>
        <begin position="105"/>
        <end position="120"/>
    </location>
</feature>
<feature type="strand" evidence="17">
    <location>
        <begin position="123"/>
        <end position="125"/>
    </location>
</feature>
<feature type="strand" evidence="17">
    <location>
        <begin position="127"/>
        <end position="129"/>
    </location>
</feature>
<feature type="helix" evidence="17">
    <location>
        <begin position="132"/>
        <end position="148"/>
    </location>
</feature>
<feature type="turn" evidence="17">
    <location>
        <begin position="149"/>
        <end position="155"/>
    </location>
</feature>
<feature type="helix" evidence="17">
    <location>
        <begin position="159"/>
        <end position="184"/>
    </location>
</feature>
<feature type="turn" evidence="15">
    <location>
        <begin position="185"/>
        <end position="188"/>
    </location>
</feature>
<feature type="strand" evidence="17">
    <location>
        <begin position="195"/>
        <end position="199"/>
    </location>
</feature>
<feature type="helix" evidence="17">
    <location>
        <begin position="205"/>
        <end position="220"/>
    </location>
</feature>
<feature type="turn" evidence="17">
    <location>
        <begin position="223"/>
        <end position="226"/>
    </location>
</feature>
<feature type="strand" evidence="17">
    <location>
        <begin position="232"/>
        <end position="238"/>
    </location>
</feature>
<feature type="turn" evidence="17">
    <location>
        <begin position="240"/>
        <end position="243"/>
    </location>
</feature>
<feature type="helix" evidence="17">
    <location>
        <begin position="251"/>
        <end position="264"/>
    </location>
</feature>
<feature type="strand" evidence="17">
    <location>
        <begin position="268"/>
        <end position="271"/>
    </location>
</feature>
<feature type="helix" evidence="17">
    <location>
        <begin position="272"/>
        <end position="279"/>
    </location>
</feature>
<feature type="turn" evidence="17">
    <location>
        <begin position="289"/>
        <end position="291"/>
    </location>
</feature>
<feature type="strand" evidence="17">
    <location>
        <begin position="310"/>
        <end position="318"/>
    </location>
</feature>
<feature type="helix" evidence="17">
    <location>
        <begin position="319"/>
        <end position="324"/>
    </location>
</feature>
<feature type="helix" evidence="17">
    <location>
        <begin position="334"/>
        <end position="358"/>
    </location>
</feature>
<feature type="turn" evidence="17">
    <location>
        <begin position="359"/>
        <end position="361"/>
    </location>
</feature>
<feature type="helix" evidence="17">
    <location>
        <begin position="364"/>
        <end position="366"/>
    </location>
</feature>
<feature type="helix" evidence="17">
    <location>
        <begin position="368"/>
        <end position="371"/>
    </location>
</feature>
<feature type="strand" evidence="17">
    <location>
        <begin position="384"/>
        <end position="386"/>
    </location>
</feature>
<feature type="helix" evidence="17">
    <location>
        <begin position="387"/>
        <end position="390"/>
    </location>
</feature>
<feature type="turn" evidence="17">
    <location>
        <begin position="391"/>
        <end position="394"/>
    </location>
</feature>
<feature type="strand" evidence="17">
    <location>
        <begin position="395"/>
        <end position="402"/>
    </location>
</feature>
<feature type="helix" evidence="17">
    <location>
        <begin position="404"/>
        <end position="411"/>
    </location>
</feature>
<feature type="helix" evidence="17">
    <location>
        <begin position="416"/>
        <end position="434"/>
    </location>
</feature>
<feature type="strand" evidence="17">
    <location>
        <begin position="437"/>
        <end position="441"/>
    </location>
</feature>
<feature type="helix" evidence="17">
    <location>
        <begin position="448"/>
        <end position="460"/>
    </location>
</feature>
<feature type="turn" evidence="17">
    <location>
        <begin position="464"/>
        <end position="467"/>
    </location>
</feature>
<feature type="strand" evidence="17">
    <location>
        <begin position="468"/>
        <end position="471"/>
    </location>
</feature>
<feature type="strand" evidence="14">
    <location>
        <begin position="480"/>
        <end position="482"/>
    </location>
</feature>
<feature type="helix" evidence="17">
    <location>
        <begin position="486"/>
        <end position="493"/>
    </location>
</feature>
<feature type="helix" evidence="17">
    <location>
        <begin position="494"/>
        <end position="498"/>
    </location>
</feature>
<feature type="strand" evidence="17">
    <location>
        <begin position="506"/>
        <end position="509"/>
    </location>
</feature>
<feature type="helix" evidence="17">
    <location>
        <begin position="517"/>
        <end position="530"/>
    </location>
</feature>
<feature type="strand" evidence="17">
    <location>
        <begin position="532"/>
        <end position="537"/>
    </location>
</feature>
<feature type="strand" evidence="17">
    <location>
        <begin position="540"/>
        <end position="542"/>
    </location>
</feature>
<feature type="turn" evidence="18">
    <location>
        <begin position="544"/>
        <end position="546"/>
    </location>
</feature>
<feature type="strand" evidence="16">
    <location>
        <begin position="553"/>
        <end position="555"/>
    </location>
</feature>
<feature type="strand" evidence="18">
    <location>
        <begin position="556"/>
        <end position="560"/>
    </location>
</feature>
<feature type="strand" evidence="18">
    <location>
        <begin position="562"/>
        <end position="564"/>
    </location>
</feature>
<feature type="helix" evidence="18">
    <location>
        <begin position="569"/>
        <end position="571"/>
    </location>
</feature>
<feature type="strand" evidence="17">
    <location>
        <begin position="573"/>
        <end position="576"/>
    </location>
</feature>
<feature type="strand" evidence="17">
    <location>
        <begin position="578"/>
        <end position="581"/>
    </location>
</feature>
<reference key="1">
    <citation type="journal article" date="1987" name="Nucleic Acids Res.">
        <title>Nucleotide sequence and primary structures of gene products coded for by the T4 genome between map positions 48.266 kb and 39.166 kb.</title>
        <authorList>
            <person name="Tomaschewski J."/>
            <person name="Rueger W."/>
        </authorList>
    </citation>
    <scope>NUCLEOTIDE SEQUENCE [GENOMIC DNA]</scope>
    <source>
        <strain>C</strain>
    </source>
</reference>
<reference key="2">
    <citation type="journal article" date="2003" name="Microbiol. Mol. Biol. Rev.">
        <title>Bacteriophage T4 genome.</title>
        <authorList>
            <person name="Miller E.S."/>
            <person name="Kutter E."/>
            <person name="Mosig G."/>
            <person name="Arisaka F."/>
            <person name="Kunisawa T."/>
            <person name="Ruger W."/>
        </authorList>
    </citation>
    <scope>NUCLEOTIDE SEQUENCE [LARGE SCALE GENOMIC DNA]</scope>
</reference>
<reference key="3">
    <citation type="journal article" date="1988" name="Genetics">
        <title>Regulation of two nested proteins from gene 49 (recombination endonuclease VII) and of a lambda RexA-like protein of bacteriophage T4.</title>
        <authorList>
            <person name="Barth K.A."/>
            <person name="Powell D."/>
            <person name="Trupin M."/>
            <person name="Mosig G."/>
        </authorList>
    </citation>
    <scope>NUCLEOTIDE SEQUENCE [GENOMIC DNA] OF 1-181</scope>
</reference>
<reference key="4">
    <citation type="journal article" date="1991" name="J. Bacteriol.">
        <title>The product of the split sunY gene of bacteriophage T4 is a processed protein.</title>
        <authorList>
            <person name="Zeh A."/>
            <person name="Shub D.A."/>
        </authorList>
    </citation>
    <scope>IDENTIFICATION</scope>
</reference>
<reference key="5">
    <citation type="journal article" date="1993" name="Proc. Natl. Acad. Sci. U.S.A.">
        <title>A possible glycine radical in anaerobic ribonucleotide reductase from Escherichia coli: nucleotide sequence of the cloned nrdD gene.</title>
        <authorList>
            <person name="Sun X."/>
            <person name="Harder J."/>
            <person name="Krook M."/>
            <person name="Joernvall H."/>
            <person name="Sjoeberg B.-M."/>
            <person name="Reichard P."/>
        </authorList>
    </citation>
    <scope>POSSIBLE FUNCTION</scope>
</reference>
<reference key="6">
    <citation type="journal article" date="1994" name="J. Biol. Chem.">
        <title>Intron-containing T4 bacteriophage gene sunY encodes an anaerobic ribonucleotide reductase.</title>
        <authorList>
            <person name="Young P."/>
            <person name="Oehman M."/>
            <person name="Xu M.Q."/>
            <person name="Shub D.A."/>
            <person name="Sjoeberg B.-M."/>
        </authorList>
    </citation>
    <scope>FUNCTION AS AN ANAEROBIC RIBONUCLEOTIDE REDUCTASE</scope>
</reference>
<reference key="7">
    <citation type="journal article" date="1996" name="J. Biol. Chem.">
        <title>Bacteriophage T4 anaerobic ribonucleotide reductase contains a stable glycyl radical at position 580.</title>
        <authorList>
            <person name="Young P."/>
            <person name="Andersson J."/>
            <person name="Sahlin M."/>
            <person name="Sjoeberg B.-M."/>
        </authorList>
    </citation>
    <scope>FUNCTION</scope>
    <scope>CATALYTIC ACTIVITY</scope>
    <scope>ACTIVITY REGULATION</scope>
    <scope>SUBUNIT</scope>
    <scope>INTERACTION WITH NRDG</scope>
    <scope>GLYCYL RADICAL AT GLY-580</scope>
    <scope>MUTAGENESIS OF GLY-580</scope>
</reference>
<reference key="8">
    <citation type="journal article" date="1999" name="Science">
        <title>A glycyl radical site in the crystal structure of a class III ribonucleotide reductase.</title>
        <authorList>
            <person name="Logan D.T."/>
            <person name="Andersson J."/>
            <person name="Sjoeberg B.-M."/>
            <person name="Nordlund P."/>
        </authorList>
    </citation>
    <scope>X-RAY CRYSTALLOGRAPHY (2.75 ANGSTROMS) OF MUTANT ALA-580</scope>
</reference>
<reference evidence="9 10 11 12" key="9">
    <citation type="journal article" date="2001" name="Structure">
        <title>Structural basis for allosteric substrate specificity regulation in anaerobic ribonucleotide reductases.</title>
        <authorList>
            <person name="Larsson K.M."/>
            <person name="Andersson J."/>
            <person name="Sjoberg B.M."/>
            <person name="Nordlund P."/>
            <person name="Logan D.T."/>
        </authorList>
    </citation>
    <scope>X-RAY CRYSTALLOGRAPHY (2.45 ANGSTROMS) IN COMPLEXES WITH DCTP; DTTP; DATP AND IRON</scope>
</reference>
<reference evidence="13" key="10">
    <citation type="journal article" date="2003" name="Proc. Natl. Acad. Sci. U.S.A.">
        <title>A metal-binding site in the catalytic subunit of anaerobic ribonucleotide reductase.</title>
        <authorList>
            <person name="Logan D.T."/>
            <person name="Mulliez E."/>
            <person name="Larsson K.-M."/>
            <person name="Bodevin S."/>
            <person name="Atta M."/>
            <person name="Garnaud P.E."/>
            <person name="Sjoeberg B.-M."/>
            <person name="Fontecave M."/>
        </authorList>
    </citation>
    <scope>X-RAY CRYSTALLOGRAPHY (2.45 ANGSTROMS) IN COMPLEX WITH DGTP AND ZINC</scope>
    <scope>ZINC-BINDING</scope>
</reference>